<feature type="chain" id="PRO_1000200344" description="tRNA uridine(34) hydroxylase">
    <location>
        <begin position="1"/>
        <end position="284"/>
    </location>
</feature>
<feature type="domain" description="Rhodanese" evidence="1">
    <location>
        <begin position="132"/>
        <end position="226"/>
    </location>
</feature>
<feature type="active site" description="Cysteine persulfide intermediate" evidence="1">
    <location>
        <position position="186"/>
    </location>
</feature>
<evidence type="ECO:0000255" key="1">
    <source>
        <dbReference type="HAMAP-Rule" id="MF_00469"/>
    </source>
</evidence>
<comment type="function">
    <text evidence="1">Catalyzes oxygen-dependent 5-hydroxyuridine (ho5U) modification at position 34 in tRNAs.</text>
</comment>
<comment type="catalytic activity">
    <reaction evidence="1">
        <text>uridine(34) in tRNA + AH2 + O2 = 5-hydroxyuridine(34) in tRNA + A + H2O</text>
        <dbReference type="Rhea" id="RHEA:64224"/>
        <dbReference type="Rhea" id="RHEA-COMP:11727"/>
        <dbReference type="Rhea" id="RHEA-COMP:13381"/>
        <dbReference type="ChEBI" id="CHEBI:13193"/>
        <dbReference type="ChEBI" id="CHEBI:15377"/>
        <dbReference type="ChEBI" id="CHEBI:15379"/>
        <dbReference type="ChEBI" id="CHEBI:17499"/>
        <dbReference type="ChEBI" id="CHEBI:65315"/>
        <dbReference type="ChEBI" id="CHEBI:136877"/>
    </reaction>
</comment>
<comment type="similarity">
    <text evidence="1">Belongs to the TrhO family.</text>
</comment>
<keyword id="KW-0560">Oxidoreductase</keyword>
<keyword id="KW-0819">tRNA processing</keyword>
<dbReference type="EC" id="1.14.-.-" evidence="1"/>
<dbReference type="EMBL" id="CP001025">
    <property type="protein sequence ID" value="ACB64712.1"/>
    <property type="molecule type" value="Genomic_DNA"/>
</dbReference>
<dbReference type="RefSeq" id="WP_011657537.1">
    <property type="nucleotide sequence ID" value="NC_010551.1"/>
</dbReference>
<dbReference type="SMR" id="B1YU72"/>
<dbReference type="KEGG" id="bac:BamMC406_2233"/>
<dbReference type="HOGENOM" id="CLU_038878_0_1_4"/>
<dbReference type="OrthoDB" id="9778326at2"/>
<dbReference type="Proteomes" id="UP000001680">
    <property type="component" value="Chromosome 1"/>
</dbReference>
<dbReference type="GO" id="GO:0016705">
    <property type="term" value="F:oxidoreductase activity, acting on paired donors, with incorporation or reduction of molecular oxygen"/>
    <property type="evidence" value="ECO:0007669"/>
    <property type="project" value="UniProtKB-UniRule"/>
</dbReference>
<dbReference type="GO" id="GO:0006400">
    <property type="term" value="P:tRNA modification"/>
    <property type="evidence" value="ECO:0007669"/>
    <property type="project" value="UniProtKB-UniRule"/>
</dbReference>
<dbReference type="CDD" id="cd01518">
    <property type="entry name" value="RHOD_YceA"/>
    <property type="match status" value="1"/>
</dbReference>
<dbReference type="Gene3D" id="3.30.70.100">
    <property type="match status" value="1"/>
</dbReference>
<dbReference type="Gene3D" id="3.40.250.10">
    <property type="entry name" value="Rhodanese-like domain"/>
    <property type="match status" value="1"/>
</dbReference>
<dbReference type="HAMAP" id="MF_00469">
    <property type="entry name" value="TrhO"/>
    <property type="match status" value="1"/>
</dbReference>
<dbReference type="InterPro" id="IPR001763">
    <property type="entry name" value="Rhodanese-like_dom"/>
</dbReference>
<dbReference type="InterPro" id="IPR036873">
    <property type="entry name" value="Rhodanese-like_dom_sf"/>
</dbReference>
<dbReference type="InterPro" id="IPR020936">
    <property type="entry name" value="TrhO"/>
</dbReference>
<dbReference type="InterPro" id="IPR040503">
    <property type="entry name" value="TRHO_N"/>
</dbReference>
<dbReference type="NCBIfam" id="NF003703">
    <property type="entry name" value="PRK05320.1"/>
    <property type="match status" value="1"/>
</dbReference>
<dbReference type="PANTHER" id="PTHR43268:SF3">
    <property type="entry name" value="RHODANESE-LIKE DOMAIN-CONTAINING PROTEIN 7-RELATED"/>
    <property type="match status" value="1"/>
</dbReference>
<dbReference type="PANTHER" id="PTHR43268">
    <property type="entry name" value="THIOSULFATE SULFURTRANSFERASE/RHODANESE-LIKE DOMAIN-CONTAINING PROTEIN 2"/>
    <property type="match status" value="1"/>
</dbReference>
<dbReference type="Pfam" id="PF00581">
    <property type="entry name" value="Rhodanese"/>
    <property type="match status" value="1"/>
</dbReference>
<dbReference type="Pfam" id="PF17773">
    <property type="entry name" value="UPF0176_N"/>
    <property type="match status" value="1"/>
</dbReference>
<dbReference type="SMART" id="SM00450">
    <property type="entry name" value="RHOD"/>
    <property type="match status" value="1"/>
</dbReference>
<dbReference type="SUPFAM" id="SSF52821">
    <property type="entry name" value="Rhodanese/Cell cycle control phosphatase"/>
    <property type="match status" value="1"/>
</dbReference>
<dbReference type="PROSITE" id="PS50206">
    <property type="entry name" value="RHODANESE_3"/>
    <property type="match status" value="1"/>
</dbReference>
<organism>
    <name type="scientific">Burkholderia ambifaria (strain MC40-6)</name>
    <dbReference type="NCBI Taxonomy" id="398577"/>
    <lineage>
        <taxon>Bacteria</taxon>
        <taxon>Pseudomonadati</taxon>
        <taxon>Pseudomonadota</taxon>
        <taxon>Betaproteobacteria</taxon>
        <taxon>Burkholderiales</taxon>
        <taxon>Burkholderiaceae</taxon>
        <taxon>Burkholderia</taxon>
        <taxon>Burkholderia cepacia complex</taxon>
    </lineage>
</organism>
<gene>
    <name evidence="1" type="primary">trhO</name>
    <name type="ordered locus">BamMC406_2233</name>
</gene>
<name>TRHO_BURA4</name>
<sequence length="284" mass="31493">MTIVNLAAYHFVSIDATEQWRPLVTARCNELGLRGTILLAPEGINLFIAGPREATDAFIDYIRHDPLFEGKFATLQFKESLSDSQPFRRMLVRLKREIITMKKPAIKPELGRAPSVDARTLKAWLDRGHDDAGRPVVMLDTRNAFEVDVGTFDGALDYRIDKFSEFPEVIDANRADLEGRTVVSFCTGGIRCEKAAIHMKEIGIDNVYQLEGGILKYFEEVGGAHYHGDCFVFDYRTALNPQLQPTENVTCFACRAVVTPEAQQSPSYVPGKSCPACAQAASAA</sequence>
<proteinExistence type="inferred from homology"/>
<accession>B1YU72</accession>
<reference key="1">
    <citation type="submission" date="2008-04" db="EMBL/GenBank/DDBJ databases">
        <title>Complete sequence of chromosome 1 of Burkholderia ambifaria MC40-6.</title>
        <authorList>
            <person name="Copeland A."/>
            <person name="Lucas S."/>
            <person name="Lapidus A."/>
            <person name="Glavina del Rio T."/>
            <person name="Dalin E."/>
            <person name="Tice H."/>
            <person name="Pitluck S."/>
            <person name="Chain P."/>
            <person name="Malfatti S."/>
            <person name="Shin M."/>
            <person name="Vergez L."/>
            <person name="Lang D."/>
            <person name="Schmutz J."/>
            <person name="Larimer F."/>
            <person name="Land M."/>
            <person name="Hauser L."/>
            <person name="Kyrpides N."/>
            <person name="Lykidis A."/>
            <person name="Ramette A."/>
            <person name="Konstantinidis K."/>
            <person name="Tiedje J."/>
            <person name="Richardson P."/>
        </authorList>
    </citation>
    <scope>NUCLEOTIDE SEQUENCE [LARGE SCALE GENOMIC DNA]</scope>
    <source>
        <strain>MC40-6</strain>
    </source>
</reference>
<protein>
    <recommendedName>
        <fullName evidence="1">tRNA uridine(34) hydroxylase</fullName>
        <ecNumber evidence="1">1.14.-.-</ecNumber>
    </recommendedName>
    <alternativeName>
        <fullName evidence="1">tRNA hydroxylation protein O</fullName>
    </alternativeName>
</protein>